<gene>
    <name evidence="1" type="primary">apaH</name>
    <name type="ordered locus">ECED1_0050</name>
</gene>
<proteinExistence type="inferred from homology"/>
<accession>B7MNQ8</accession>
<comment type="function">
    <text evidence="1">Hydrolyzes diadenosine 5',5'''-P1,P4-tetraphosphate to yield ADP.</text>
</comment>
<comment type="catalytic activity">
    <reaction evidence="1">
        <text>P(1),P(4)-bis(5'-adenosyl) tetraphosphate + H2O = 2 ADP + 2 H(+)</text>
        <dbReference type="Rhea" id="RHEA:24252"/>
        <dbReference type="ChEBI" id="CHEBI:15377"/>
        <dbReference type="ChEBI" id="CHEBI:15378"/>
        <dbReference type="ChEBI" id="CHEBI:58141"/>
        <dbReference type="ChEBI" id="CHEBI:456216"/>
        <dbReference type="EC" id="3.6.1.41"/>
    </reaction>
</comment>
<comment type="similarity">
    <text evidence="1">Belongs to the Ap4A hydrolase family.</text>
</comment>
<feature type="chain" id="PRO_1000124452" description="Bis(5'-nucleosyl)-tetraphosphatase, symmetrical">
    <location>
        <begin position="1"/>
        <end position="282"/>
    </location>
</feature>
<evidence type="ECO:0000255" key="1">
    <source>
        <dbReference type="HAMAP-Rule" id="MF_00199"/>
    </source>
</evidence>
<organism>
    <name type="scientific">Escherichia coli O81 (strain ED1a)</name>
    <dbReference type="NCBI Taxonomy" id="585397"/>
    <lineage>
        <taxon>Bacteria</taxon>
        <taxon>Pseudomonadati</taxon>
        <taxon>Pseudomonadota</taxon>
        <taxon>Gammaproteobacteria</taxon>
        <taxon>Enterobacterales</taxon>
        <taxon>Enterobacteriaceae</taxon>
        <taxon>Escherichia</taxon>
    </lineage>
</organism>
<name>APAH_ECO81</name>
<keyword id="KW-0378">Hydrolase</keyword>
<sequence>MATYLIGDVHGCYDELIALLHKVEFTPGKDTLWLTGDLVARGPGSLDVLRYVKSLGDSVRLVLGNHDLHLLAVFAGISRNKPKDRLTPLLEAPDADELLNWLRRQPLLQIDEEKKLVMAHAGITPQWDLQTAKECARDVEAVLSSDSYPFFLDAMYGDMPNNWSPELRGLGRLRFITNAFTRMRFCFPNGQLDMYSKESPEEAPAPLKPWFAIPGPVAEEYNIAFGHWASLEGKGTPEGIYALDTGCCWGGTLTCLRWEDKQYFVQPSNRHKDLSEGEAVAS</sequence>
<dbReference type="EC" id="3.6.1.41" evidence="1"/>
<dbReference type="EMBL" id="CU928162">
    <property type="protein sequence ID" value="CAR06273.1"/>
    <property type="molecule type" value="Genomic_DNA"/>
</dbReference>
<dbReference type="RefSeq" id="WP_000257181.1">
    <property type="nucleotide sequence ID" value="NC_011745.1"/>
</dbReference>
<dbReference type="SMR" id="B7MNQ8"/>
<dbReference type="KEGG" id="ecq:ECED1_0050"/>
<dbReference type="HOGENOM" id="CLU_056184_2_0_6"/>
<dbReference type="Proteomes" id="UP000000748">
    <property type="component" value="Chromosome"/>
</dbReference>
<dbReference type="GO" id="GO:0008803">
    <property type="term" value="F:bis(5'-nucleosyl)-tetraphosphatase (symmetrical) activity"/>
    <property type="evidence" value="ECO:0007669"/>
    <property type="project" value="UniProtKB-UniRule"/>
</dbReference>
<dbReference type="CDD" id="cd07422">
    <property type="entry name" value="MPP_ApaH"/>
    <property type="match status" value="1"/>
</dbReference>
<dbReference type="FunFam" id="3.60.21.10:FF:000013">
    <property type="entry name" value="Bis(5'-nucleosyl)-tetraphosphatase, symmetrical"/>
    <property type="match status" value="1"/>
</dbReference>
<dbReference type="Gene3D" id="3.60.21.10">
    <property type="match status" value="1"/>
</dbReference>
<dbReference type="HAMAP" id="MF_00199">
    <property type="entry name" value="ApaH"/>
    <property type="match status" value="1"/>
</dbReference>
<dbReference type="InterPro" id="IPR004617">
    <property type="entry name" value="ApaH"/>
</dbReference>
<dbReference type="InterPro" id="IPR004843">
    <property type="entry name" value="Calcineurin-like_PHP_ApaH"/>
</dbReference>
<dbReference type="InterPro" id="IPR029052">
    <property type="entry name" value="Metallo-depent_PP-like"/>
</dbReference>
<dbReference type="NCBIfam" id="TIGR00668">
    <property type="entry name" value="apaH"/>
    <property type="match status" value="1"/>
</dbReference>
<dbReference type="NCBIfam" id="NF001204">
    <property type="entry name" value="PRK00166.1"/>
    <property type="match status" value="1"/>
</dbReference>
<dbReference type="PANTHER" id="PTHR40942">
    <property type="match status" value="1"/>
</dbReference>
<dbReference type="PANTHER" id="PTHR40942:SF4">
    <property type="entry name" value="CYTOCHROME C5"/>
    <property type="match status" value="1"/>
</dbReference>
<dbReference type="Pfam" id="PF00149">
    <property type="entry name" value="Metallophos"/>
    <property type="match status" value="1"/>
</dbReference>
<dbReference type="PIRSF" id="PIRSF000903">
    <property type="entry name" value="B5n-ttraPtase_sm"/>
    <property type="match status" value="1"/>
</dbReference>
<dbReference type="SUPFAM" id="SSF56300">
    <property type="entry name" value="Metallo-dependent phosphatases"/>
    <property type="match status" value="1"/>
</dbReference>
<protein>
    <recommendedName>
        <fullName evidence="1">Bis(5'-nucleosyl)-tetraphosphatase, symmetrical</fullName>
        <ecNumber evidence="1">3.6.1.41</ecNumber>
    </recommendedName>
    <alternativeName>
        <fullName evidence="1">Ap4A hydrolase</fullName>
    </alternativeName>
    <alternativeName>
        <fullName evidence="1">Diadenosine 5',5'''-P1,P4-tetraphosphate pyrophosphohydrolase</fullName>
    </alternativeName>
    <alternativeName>
        <fullName evidence="1">Diadenosine tetraphosphatase</fullName>
    </alternativeName>
</protein>
<reference key="1">
    <citation type="journal article" date="2009" name="PLoS Genet.">
        <title>Organised genome dynamics in the Escherichia coli species results in highly diverse adaptive paths.</title>
        <authorList>
            <person name="Touchon M."/>
            <person name="Hoede C."/>
            <person name="Tenaillon O."/>
            <person name="Barbe V."/>
            <person name="Baeriswyl S."/>
            <person name="Bidet P."/>
            <person name="Bingen E."/>
            <person name="Bonacorsi S."/>
            <person name="Bouchier C."/>
            <person name="Bouvet O."/>
            <person name="Calteau A."/>
            <person name="Chiapello H."/>
            <person name="Clermont O."/>
            <person name="Cruveiller S."/>
            <person name="Danchin A."/>
            <person name="Diard M."/>
            <person name="Dossat C."/>
            <person name="Karoui M.E."/>
            <person name="Frapy E."/>
            <person name="Garry L."/>
            <person name="Ghigo J.M."/>
            <person name="Gilles A.M."/>
            <person name="Johnson J."/>
            <person name="Le Bouguenec C."/>
            <person name="Lescat M."/>
            <person name="Mangenot S."/>
            <person name="Martinez-Jehanne V."/>
            <person name="Matic I."/>
            <person name="Nassif X."/>
            <person name="Oztas S."/>
            <person name="Petit M.A."/>
            <person name="Pichon C."/>
            <person name="Rouy Z."/>
            <person name="Ruf C.S."/>
            <person name="Schneider D."/>
            <person name="Tourret J."/>
            <person name="Vacherie B."/>
            <person name="Vallenet D."/>
            <person name="Medigue C."/>
            <person name="Rocha E.P.C."/>
            <person name="Denamur E."/>
        </authorList>
    </citation>
    <scope>NUCLEOTIDE SEQUENCE [LARGE SCALE GENOMIC DNA]</scope>
    <source>
        <strain>ED1a</strain>
    </source>
</reference>